<reference key="1">
    <citation type="journal article" date="2009" name="PLoS Genet.">
        <title>Organised genome dynamics in the Escherichia coli species results in highly diverse adaptive paths.</title>
        <authorList>
            <person name="Touchon M."/>
            <person name="Hoede C."/>
            <person name="Tenaillon O."/>
            <person name="Barbe V."/>
            <person name="Baeriswyl S."/>
            <person name="Bidet P."/>
            <person name="Bingen E."/>
            <person name="Bonacorsi S."/>
            <person name="Bouchier C."/>
            <person name="Bouvet O."/>
            <person name="Calteau A."/>
            <person name="Chiapello H."/>
            <person name="Clermont O."/>
            <person name="Cruveiller S."/>
            <person name="Danchin A."/>
            <person name="Diard M."/>
            <person name="Dossat C."/>
            <person name="Karoui M.E."/>
            <person name="Frapy E."/>
            <person name="Garry L."/>
            <person name="Ghigo J.M."/>
            <person name="Gilles A.M."/>
            <person name="Johnson J."/>
            <person name="Le Bouguenec C."/>
            <person name="Lescat M."/>
            <person name="Mangenot S."/>
            <person name="Martinez-Jehanne V."/>
            <person name="Matic I."/>
            <person name="Nassif X."/>
            <person name="Oztas S."/>
            <person name="Petit M.A."/>
            <person name="Pichon C."/>
            <person name="Rouy Z."/>
            <person name="Ruf C.S."/>
            <person name="Schneider D."/>
            <person name="Tourret J."/>
            <person name="Vacherie B."/>
            <person name="Vallenet D."/>
            <person name="Medigue C."/>
            <person name="Rocha E.P.C."/>
            <person name="Denamur E."/>
        </authorList>
    </citation>
    <scope>NUCLEOTIDE SEQUENCE [LARGE SCALE GENOMIC DNA]</scope>
    <source>
        <strain>ATCC 35469 / DSM 13698 / BCRC 15582 / CCUG 18766 / IAM 14443 / JCM 21226 / LMG 7866 / NBRC 102419 / NCTC 12128 / CDC 0568-73</strain>
    </source>
</reference>
<gene>
    <name evidence="1" type="primary">ubiA</name>
    <name type="ordered locus">EFER_4131</name>
</gene>
<dbReference type="EC" id="2.5.1.39" evidence="1"/>
<dbReference type="EMBL" id="CU928158">
    <property type="protein sequence ID" value="CAQ91553.1"/>
    <property type="molecule type" value="Genomic_DNA"/>
</dbReference>
<dbReference type="RefSeq" id="WP_000455219.1">
    <property type="nucleotide sequence ID" value="NC_011740.1"/>
</dbReference>
<dbReference type="SMR" id="B7LL12"/>
<dbReference type="GeneID" id="75059283"/>
<dbReference type="KEGG" id="efe:EFER_4131"/>
<dbReference type="HOGENOM" id="CLU_034879_1_0_6"/>
<dbReference type="OrthoDB" id="9782418at2"/>
<dbReference type="UniPathway" id="UPA00232"/>
<dbReference type="Proteomes" id="UP000000745">
    <property type="component" value="Chromosome"/>
</dbReference>
<dbReference type="GO" id="GO:0005886">
    <property type="term" value="C:plasma membrane"/>
    <property type="evidence" value="ECO:0007669"/>
    <property type="project" value="UniProtKB-SubCell"/>
</dbReference>
<dbReference type="GO" id="GO:0008412">
    <property type="term" value="F:4-hydroxybenzoate polyprenyltransferase activity"/>
    <property type="evidence" value="ECO:0007669"/>
    <property type="project" value="UniProtKB-UniRule"/>
</dbReference>
<dbReference type="GO" id="GO:0006744">
    <property type="term" value="P:ubiquinone biosynthetic process"/>
    <property type="evidence" value="ECO:0007669"/>
    <property type="project" value="UniProtKB-UniRule"/>
</dbReference>
<dbReference type="CDD" id="cd13959">
    <property type="entry name" value="PT_UbiA_COQ2"/>
    <property type="match status" value="1"/>
</dbReference>
<dbReference type="FunFam" id="1.10.357.140:FF:000002">
    <property type="entry name" value="4-hydroxybenzoate octaprenyltransferase"/>
    <property type="match status" value="1"/>
</dbReference>
<dbReference type="FunFam" id="1.20.120.1780:FF:000001">
    <property type="entry name" value="4-hydroxybenzoate octaprenyltransferase"/>
    <property type="match status" value="1"/>
</dbReference>
<dbReference type="Gene3D" id="1.10.357.140">
    <property type="entry name" value="UbiA prenyltransferase"/>
    <property type="match status" value="1"/>
</dbReference>
<dbReference type="Gene3D" id="1.20.120.1780">
    <property type="entry name" value="UbiA prenyltransferase"/>
    <property type="match status" value="1"/>
</dbReference>
<dbReference type="HAMAP" id="MF_01635">
    <property type="entry name" value="UbiA"/>
    <property type="match status" value="1"/>
</dbReference>
<dbReference type="InterPro" id="IPR006370">
    <property type="entry name" value="HB_polyprenyltransferase-like"/>
</dbReference>
<dbReference type="InterPro" id="IPR039653">
    <property type="entry name" value="Prenyltransferase"/>
</dbReference>
<dbReference type="InterPro" id="IPR000537">
    <property type="entry name" value="UbiA_prenyltransferase"/>
</dbReference>
<dbReference type="InterPro" id="IPR030470">
    <property type="entry name" value="UbiA_prenylTrfase_CS"/>
</dbReference>
<dbReference type="InterPro" id="IPR044878">
    <property type="entry name" value="UbiA_sf"/>
</dbReference>
<dbReference type="NCBIfam" id="TIGR01474">
    <property type="entry name" value="ubiA_proteo"/>
    <property type="match status" value="1"/>
</dbReference>
<dbReference type="PANTHER" id="PTHR11048:SF28">
    <property type="entry name" value="4-HYDROXYBENZOATE POLYPRENYLTRANSFERASE, MITOCHONDRIAL"/>
    <property type="match status" value="1"/>
</dbReference>
<dbReference type="PANTHER" id="PTHR11048">
    <property type="entry name" value="PRENYLTRANSFERASES"/>
    <property type="match status" value="1"/>
</dbReference>
<dbReference type="Pfam" id="PF01040">
    <property type="entry name" value="UbiA"/>
    <property type="match status" value="1"/>
</dbReference>
<dbReference type="PROSITE" id="PS00943">
    <property type="entry name" value="UBIA"/>
    <property type="match status" value="1"/>
</dbReference>
<name>UBIA_ESCF3</name>
<evidence type="ECO:0000255" key="1">
    <source>
        <dbReference type="HAMAP-Rule" id="MF_01635"/>
    </source>
</evidence>
<keyword id="KW-0997">Cell inner membrane</keyword>
<keyword id="KW-1003">Cell membrane</keyword>
<keyword id="KW-0460">Magnesium</keyword>
<keyword id="KW-0472">Membrane</keyword>
<keyword id="KW-0808">Transferase</keyword>
<keyword id="KW-0812">Transmembrane</keyword>
<keyword id="KW-1133">Transmembrane helix</keyword>
<keyword id="KW-0831">Ubiquinone biosynthesis</keyword>
<sequence>MEWSLTQNKLLAFHRLMRTDKPIGALLLLWPTLWALWVATPGVPPLWILAVFVAGVWLMRAAGCVVNDYADRKFDGHVKRTANRPLPSGAVTEKEARTLFVVLVLLAFLLVLTLNTMTILLSVAALALAWVYPFMKRYTHLPQVVLGAAFGWSIPMAFAAVSESVPLSCWLMFLANILWAVAYDTQYAMVDRDDDVKIGIKSTAILFGQYDKFIIGVLQIGVMVLMALIGWLNGLDWGYYWSILVAGGLFVYQQKLIANREREACFKAFMNNNYVGLVLFLGLAMSYWHF</sequence>
<organism>
    <name type="scientific">Escherichia fergusonii (strain ATCC 35469 / DSM 13698 / CCUG 18766 / IAM 14443 / JCM 21226 / LMG 7866 / NBRC 102419 / NCTC 12128 / CDC 0568-73)</name>
    <dbReference type="NCBI Taxonomy" id="585054"/>
    <lineage>
        <taxon>Bacteria</taxon>
        <taxon>Pseudomonadati</taxon>
        <taxon>Pseudomonadota</taxon>
        <taxon>Gammaproteobacteria</taxon>
        <taxon>Enterobacterales</taxon>
        <taxon>Enterobacteriaceae</taxon>
        <taxon>Escherichia</taxon>
    </lineage>
</organism>
<comment type="function">
    <text evidence="1">Catalyzes the prenylation of para-hydroxybenzoate (PHB) with an all-trans polyprenyl group. Mediates the second step in the final reaction sequence of ubiquinone-8 (UQ-8) biosynthesis, which is the condensation of the polyisoprenoid side chain with PHB, generating the first membrane-bound Q intermediate 3-octaprenyl-4-hydroxybenzoate.</text>
</comment>
<comment type="catalytic activity">
    <reaction evidence="1">
        <text>all-trans-octaprenyl diphosphate + 4-hydroxybenzoate = 4-hydroxy-3-(all-trans-octaprenyl)benzoate + diphosphate</text>
        <dbReference type="Rhea" id="RHEA:27782"/>
        <dbReference type="ChEBI" id="CHEBI:1617"/>
        <dbReference type="ChEBI" id="CHEBI:17879"/>
        <dbReference type="ChEBI" id="CHEBI:33019"/>
        <dbReference type="ChEBI" id="CHEBI:57711"/>
        <dbReference type="EC" id="2.5.1.39"/>
    </reaction>
</comment>
<comment type="cofactor">
    <cofactor evidence="1">
        <name>Mg(2+)</name>
        <dbReference type="ChEBI" id="CHEBI:18420"/>
    </cofactor>
</comment>
<comment type="pathway">
    <text evidence="1">Cofactor biosynthesis; ubiquinone biosynthesis.</text>
</comment>
<comment type="subcellular location">
    <subcellularLocation>
        <location evidence="1">Cell inner membrane</location>
        <topology evidence="1">Multi-pass membrane protein</topology>
    </subcellularLocation>
</comment>
<comment type="similarity">
    <text evidence="1">Belongs to the UbiA prenyltransferase family.</text>
</comment>
<protein>
    <recommendedName>
        <fullName evidence="1">4-hydroxybenzoate octaprenyltransferase</fullName>
        <ecNumber evidence="1">2.5.1.39</ecNumber>
    </recommendedName>
    <alternativeName>
        <fullName evidence="1">4-HB polyprenyltransferase</fullName>
    </alternativeName>
</protein>
<accession>B7LL12</accession>
<feature type="chain" id="PRO_1000186674" description="4-hydroxybenzoate octaprenyltransferase">
    <location>
        <begin position="1"/>
        <end position="290"/>
    </location>
</feature>
<feature type="transmembrane region" description="Helical" evidence="1">
    <location>
        <begin position="33"/>
        <end position="53"/>
    </location>
</feature>
<feature type="transmembrane region" description="Helical" evidence="1">
    <location>
        <begin position="99"/>
        <end position="119"/>
    </location>
</feature>
<feature type="transmembrane region" description="Helical" evidence="1">
    <location>
        <begin position="141"/>
        <end position="161"/>
    </location>
</feature>
<feature type="transmembrane region" description="Helical" evidence="1">
    <location>
        <begin position="163"/>
        <end position="183"/>
    </location>
</feature>
<feature type="transmembrane region" description="Helical" evidence="1">
    <location>
        <begin position="213"/>
        <end position="233"/>
    </location>
</feature>
<feature type="transmembrane region" description="Helical" evidence="1">
    <location>
        <begin position="237"/>
        <end position="257"/>
    </location>
</feature>
<feature type="transmembrane region" description="Helical" evidence="1">
    <location>
        <begin position="268"/>
        <end position="288"/>
    </location>
</feature>
<proteinExistence type="inferred from homology"/>